<dbReference type="EMBL" id="AY192557">
    <property type="protein sequence ID" value="AAP31906.1"/>
    <property type="molecule type" value="mRNA"/>
</dbReference>
<dbReference type="EMBL" id="AY192558">
    <property type="protein sequence ID" value="AAP31907.1"/>
    <property type="molecule type" value="mRNA"/>
</dbReference>
<dbReference type="RefSeq" id="NP_955516.1">
    <molecule id="Q863H5-1"/>
    <property type="nucleotide sequence ID" value="NM_199445.1"/>
</dbReference>
<dbReference type="SMR" id="Q863H5"/>
<dbReference type="FunCoup" id="Q863H5">
    <property type="interactions" value="50"/>
</dbReference>
<dbReference type="STRING" id="9913.ENSBTAP00000025742"/>
<dbReference type="PaxDb" id="9913-ENSBTAP00000025742"/>
<dbReference type="GeneID" id="387602"/>
<dbReference type="KEGG" id="bta:387602"/>
<dbReference type="CTD" id="60675"/>
<dbReference type="eggNOG" id="ENOG502SU1D">
    <property type="taxonomic scope" value="Eukaryota"/>
</dbReference>
<dbReference type="HOGENOM" id="CLU_143202_1_0_1"/>
<dbReference type="InParanoid" id="Q863H5"/>
<dbReference type="OrthoDB" id="6433669at2759"/>
<dbReference type="Proteomes" id="UP000009136">
    <property type="component" value="Unplaced"/>
</dbReference>
<dbReference type="GO" id="GO:0005576">
    <property type="term" value="C:extracellular region"/>
    <property type="evidence" value="ECO:0007669"/>
    <property type="project" value="UniProtKB-SubCell"/>
</dbReference>
<dbReference type="GO" id="GO:0001525">
    <property type="term" value="P:angiogenesis"/>
    <property type="evidence" value="ECO:0000250"/>
    <property type="project" value="UniProtKB"/>
</dbReference>
<dbReference type="GO" id="GO:0006935">
    <property type="term" value="P:chemotaxis"/>
    <property type="evidence" value="ECO:0000250"/>
    <property type="project" value="UniProtKB"/>
</dbReference>
<dbReference type="GO" id="GO:0001935">
    <property type="term" value="P:endothelial cell proliferation"/>
    <property type="evidence" value="ECO:0000250"/>
    <property type="project" value="UniProtKB"/>
</dbReference>
<dbReference type="GO" id="GO:0043066">
    <property type="term" value="P:negative regulation of apoptotic process"/>
    <property type="evidence" value="ECO:0000250"/>
    <property type="project" value="UniProtKB"/>
</dbReference>
<dbReference type="GO" id="GO:0007218">
    <property type="term" value="P:neuropeptide signaling pathway"/>
    <property type="evidence" value="ECO:0007669"/>
    <property type="project" value="UniProtKB-KW"/>
</dbReference>
<dbReference type="GO" id="GO:0045987">
    <property type="term" value="P:positive regulation of smooth muscle contraction"/>
    <property type="evidence" value="ECO:0000250"/>
    <property type="project" value="UniProtKB"/>
</dbReference>
<dbReference type="GO" id="GO:0048511">
    <property type="term" value="P:rhythmic process"/>
    <property type="evidence" value="ECO:0007669"/>
    <property type="project" value="UniProtKB-KW"/>
</dbReference>
<dbReference type="GO" id="GO:0007283">
    <property type="term" value="P:spermatogenesis"/>
    <property type="evidence" value="ECO:0000250"/>
    <property type="project" value="UniProtKB"/>
</dbReference>
<dbReference type="FunFam" id="2.10.80.10:FF:000002">
    <property type="entry name" value="prokineticin-2 isoform X2"/>
    <property type="match status" value="1"/>
</dbReference>
<dbReference type="Gene3D" id="2.10.80.10">
    <property type="entry name" value="Lipase, subunit A"/>
    <property type="match status" value="1"/>
</dbReference>
<dbReference type="InterPro" id="IPR009523">
    <property type="entry name" value="Prokineticin"/>
</dbReference>
<dbReference type="InterPro" id="IPR023569">
    <property type="entry name" value="Prokineticin_domain"/>
</dbReference>
<dbReference type="PANTHER" id="PTHR18821">
    <property type="entry name" value="PROKINETICIN"/>
    <property type="match status" value="1"/>
</dbReference>
<dbReference type="PANTHER" id="PTHR18821:SF8">
    <property type="entry name" value="PROKINETICIN-2"/>
    <property type="match status" value="1"/>
</dbReference>
<dbReference type="Pfam" id="PF06607">
    <property type="entry name" value="Prokineticin"/>
    <property type="match status" value="1"/>
</dbReference>
<dbReference type="SUPFAM" id="SSF57190">
    <property type="entry name" value="Colipase-like"/>
    <property type="match status" value="2"/>
</dbReference>
<protein>
    <recommendedName>
        <fullName>Prokineticin-2</fullName>
        <shortName>PK2</shortName>
    </recommendedName>
</protein>
<accession>Q863H5</accession>
<accession>Q863H4</accession>
<reference key="1">
    <citation type="journal article" date="2003" name="EMBO Rep.">
        <title>The AVIT protein family. Secreted cysteine-rich vertebrate proteins with diverse functions.</title>
        <authorList>
            <person name="Kaser A."/>
            <person name="Winklmayr M."/>
            <person name="Lepperdinger G."/>
            <person name="Kreil G."/>
        </authorList>
    </citation>
    <scope>NUCLEOTIDE SEQUENCE [MRNA] (ISOFORMS 1 AND 2)</scope>
    <source>
        <tissue>Testis</tissue>
    </source>
</reference>
<feature type="signal peptide" evidence="2">
    <location>
        <begin position="1"/>
        <end position="27"/>
    </location>
</feature>
<feature type="chain" id="PRO_0000268188" description="Prokineticin-2">
    <location>
        <begin position="28"/>
        <end position="128"/>
    </location>
</feature>
<feature type="region of interest" description="Disordered" evidence="3">
    <location>
        <begin position="71"/>
        <end position="95"/>
    </location>
</feature>
<feature type="compositionally biased region" description="Basic residues" evidence="3">
    <location>
        <begin position="83"/>
        <end position="95"/>
    </location>
</feature>
<feature type="disulfide bond" evidence="1">
    <location>
        <begin position="34"/>
        <end position="46"/>
    </location>
</feature>
<feature type="disulfide bond" evidence="1">
    <location>
        <begin position="40"/>
        <end position="58"/>
    </location>
</feature>
<feature type="disulfide bond" evidence="1">
    <location>
        <begin position="45"/>
        <end position="106"/>
    </location>
</feature>
<feature type="disulfide bond" evidence="1">
    <location>
        <begin position="68"/>
        <end position="114"/>
    </location>
</feature>
<feature type="disulfide bond" evidence="1">
    <location>
        <begin position="108"/>
        <end position="124"/>
    </location>
</feature>
<feature type="splice variant" id="VSP_021965" description="In isoform 2." evidence="4">
    <location>
        <begin position="75"/>
        <end position="94"/>
    </location>
</feature>
<proteinExistence type="evidence at transcript level"/>
<organism>
    <name type="scientific">Bos taurus</name>
    <name type="common">Bovine</name>
    <dbReference type="NCBI Taxonomy" id="9913"/>
    <lineage>
        <taxon>Eukaryota</taxon>
        <taxon>Metazoa</taxon>
        <taxon>Chordata</taxon>
        <taxon>Craniata</taxon>
        <taxon>Vertebrata</taxon>
        <taxon>Euteleostomi</taxon>
        <taxon>Mammalia</taxon>
        <taxon>Eutheria</taxon>
        <taxon>Laurasiatheria</taxon>
        <taxon>Artiodactyla</taxon>
        <taxon>Ruminantia</taxon>
        <taxon>Pecora</taxon>
        <taxon>Bovidae</taxon>
        <taxon>Bovinae</taxon>
        <taxon>Bos</taxon>
    </lineage>
</organism>
<sequence>MRSSRCARLLLLLLLPPLLLTPPAGDAAVITGACDRDPQCGGGMCCAVSLWVKSIRICTPMGKVGDSCHPMTRKNHFGNGRQERRKRKRRRKKKVPFLGRRMHHTCPCLPGLACSRTSFNRYTCLAQK</sequence>
<gene>
    <name type="primary">PROK2</name>
</gene>
<keyword id="KW-0025">Alternative splicing</keyword>
<keyword id="KW-0090">Biological rhythms</keyword>
<keyword id="KW-1015">Disulfide bond</keyword>
<keyword id="KW-0527">Neuropeptide</keyword>
<keyword id="KW-1185">Reference proteome</keyword>
<keyword id="KW-0964">Secreted</keyword>
<keyword id="KW-0732">Signal</keyword>
<name>PROK2_BOVIN</name>
<evidence type="ECO:0000250" key="1"/>
<evidence type="ECO:0000255" key="2"/>
<evidence type="ECO:0000256" key="3">
    <source>
        <dbReference type="SAM" id="MobiDB-lite"/>
    </source>
</evidence>
<evidence type="ECO:0000303" key="4">
    <source>
    </source>
</evidence>
<evidence type="ECO:0000305" key="5"/>
<comment type="function">
    <text evidence="1">May function as an output molecule from the suprachiasmatic nucleus (SCN) that transmits behavioral circadian rhythm. May also function locally within the SCN to synchronize output. Potently contracts gastrointestinal (GI) smooth muscle (By similarity).</text>
</comment>
<comment type="subcellular location">
    <subcellularLocation>
        <location evidence="1">Secreted</location>
    </subcellularLocation>
</comment>
<comment type="alternative products">
    <event type="alternative splicing"/>
    <isoform>
        <id>Q863H5-1</id>
        <name>1</name>
        <sequence type="displayed"/>
    </isoform>
    <isoform>
        <id>Q863H5-2</id>
        <name>2</name>
        <sequence type="described" ref="VSP_021965"/>
    </isoform>
</comment>
<comment type="similarity">
    <text evidence="5">Belongs to the AVIT (prokineticin) family.</text>
</comment>